<protein>
    <recommendedName>
        <fullName evidence="1">5'-nucleotidase SurE</fullName>
        <ecNumber evidence="1">3.1.3.5</ecNumber>
    </recommendedName>
    <alternativeName>
        <fullName evidence="1">Nucleoside 5'-monophosphate phosphohydrolase</fullName>
    </alternativeName>
</protein>
<organism>
    <name type="scientific">Xanthomonas axonopodis pv. citri (strain 306)</name>
    <dbReference type="NCBI Taxonomy" id="190486"/>
    <lineage>
        <taxon>Bacteria</taxon>
        <taxon>Pseudomonadati</taxon>
        <taxon>Pseudomonadota</taxon>
        <taxon>Gammaproteobacteria</taxon>
        <taxon>Lysobacterales</taxon>
        <taxon>Lysobacteraceae</taxon>
        <taxon>Xanthomonas</taxon>
    </lineage>
</organism>
<proteinExistence type="inferred from homology"/>
<evidence type="ECO:0000255" key="1">
    <source>
        <dbReference type="HAMAP-Rule" id="MF_00060"/>
    </source>
</evidence>
<comment type="function">
    <text evidence="1">Nucleotidase that shows phosphatase activity on nucleoside 5'-monophosphates.</text>
</comment>
<comment type="catalytic activity">
    <reaction evidence="1">
        <text>a ribonucleoside 5'-phosphate + H2O = a ribonucleoside + phosphate</text>
        <dbReference type="Rhea" id="RHEA:12484"/>
        <dbReference type="ChEBI" id="CHEBI:15377"/>
        <dbReference type="ChEBI" id="CHEBI:18254"/>
        <dbReference type="ChEBI" id="CHEBI:43474"/>
        <dbReference type="ChEBI" id="CHEBI:58043"/>
        <dbReference type="EC" id="3.1.3.5"/>
    </reaction>
</comment>
<comment type="cofactor">
    <cofactor evidence="1">
        <name>a divalent metal cation</name>
        <dbReference type="ChEBI" id="CHEBI:60240"/>
    </cofactor>
    <text evidence="1">Binds 1 divalent metal cation per subunit.</text>
</comment>
<comment type="subcellular location">
    <subcellularLocation>
        <location evidence="1">Cytoplasm</location>
    </subcellularLocation>
</comment>
<comment type="similarity">
    <text evidence="1">Belongs to the SurE nucleotidase family.</text>
</comment>
<gene>
    <name evidence="1" type="primary">surE</name>
    <name type="ordered locus">XAC1725</name>
</gene>
<accession>Q8PLR4</accession>
<dbReference type="EC" id="3.1.3.5" evidence="1"/>
<dbReference type="EMBL" id="AE008923">
    <property type="protein sequence ID" value="AAM36592.1"/>
    <property type="molecule type" value="Genomic_DNA"/>
</dbReference>
<dbReference type="RefSeq" id="WP_005915011.1">
    <property type="nucleotide sequence ID" value="NC_003919.1"/>
</dbReference>
<dbReference type="SMR" id="Q8PLR4"/>
<dbReference type="GeneID" id="66910875"/>
<dbReference type="KEGG" id="xac:XAC1725"/>
<dbReference type="eggNOG" id="COG0496">
    <property type="taxonomic scope" value="Bacteria"/>
</dbReference>
<dbReference type="HOGENOM" id="CLU_045192_1_2_6"/>
<dbReference type="Proteomes" id="UP000000576">
    <property type="component" value="Chromosome"/>
</dbReference>
<dbReference type="GO" id="GO:0005737">
    <property type="term" value="C:cytoplasm"/>
    <property type="evidence" value="ECO:0007669"/>
    <property type="project" value="UniProtKB-SubCell"/>
</dbReference>
<dbReference type="GO" id="GO:0008254">
    <property type="term" value="F:3'-nucleotidase activity"/>
    <property type="evidence" value="ECO:0007669"/>
    <property type="project" value="TreeGrafter"/>
</dbReference>
<dbReference type="GO" id="GO:0008253">
    <property type="term" value="F:5'-nucleotidase activity"/>
    <property type="evidence" value="ECO:0007669"/>
    <property type="project" value="UniProtKB-UniRule"/>
</dbReference>
<dbReference type="GO" id="GO:0004309">
    <property type="term" value="F:exopolyphosphatase activity"/>
    <property type="evidence" value="ECO:0007669"/>
    <property type="project" value="TreeGrafter"/>
</dbReference>
<dbReference type="GO" id="GO:0046872">
    <property type="term" value="F:metal ion binding"/>
    <property type="evidence" value="ECO:0007669"/>
    <property type="project" value="UniProtKB-UniRule"/>
</dbReference>
<dbReference type="GO" id="GO:0000166">
    <property type="term" value="F:nucleotide binding"/>
    <property type="evidence" value="ECO:0007669"/>
    <property type="project" value="UniProtKB-KW"/>
</dbReference>
<dbReference type="FunFam" id="3.40.1210.10:FF:000001">
    <property type="entry name" value="5'/3'-nucleotidase SurE"/>
    <property type="match status" value="1"/>
</dbReference>
<dbReference type="Gene3D" id="3.40.1210.10">
    <property type="entry name" value="Survival protein SurE-like phosphatase/nucleotidase"/>
    <property type="match status" value="1"/>
</dbReference>
<dbReference type="HAMAP" id="MF_00060">
    <property type="entry name" value="SurE"/>
    <property type="match status" value="1"/>
</dbReference>
<dbReference type="InterPro" id="IPR030048">
    <property type="entry name" value="SurE"/>
</dbReference>
<dbReference type="InterPro" id="IPR002828">
    <property type="entry name" value="SurE-like_Pase/nucleotidase"/>
</dbReference>
<dbReference type="InterPro" id="IPR036523">
    <property type="entry name" value="SurE-like_sf"/>
</dbReference>
<dbReference type="NCBIfam" id="NF001489">
    <property type="entry name" value="PRK00346.1-3"/>
    <property type="match status" value="1"/>
</dbReference>
<dbReference type="NCBIfam" id="NF001490">
    <property type="entry name" value="PRK00346.1-4"/>
    <property type="match status" value="1"/>
</dbReference>
<dbReference type="NCBIfam" id="TIGR00087">
    <property type="entry name" value="surE"/>
    <property type="match status" value="1"/>
</dbReference>
<dbReference type="PANTHER" id="PTHR30457">
    <property type="entry name" value="5'-NUCLEOTIDASE SURE"/>
    <property type="match status" value="1"/>
</dbReference>
<dbReference type="PANTHER" id="PTHR30457:SF12">
    <property type="entry name" value="5'_3'-NUCLEOTIDASE SURE"/>
    <property type="match status" value="1"/>
</dbReference>
<dbReference type="Pfam" id="PF01975">
    <property type="entry name" value="SurE"/>
    <property type="match status" value="1"/>
</dbReference>
<dbReference type="SUPFAM" id="SSF64167">
    <property type="entry name" value="SurE-like"/>
    <property type="match status" value="1"/>
</dbReference>
<reference key="1">
    <citation type="journal article" date="2002" name="Nature">
        <title>Comparison of the genomes of two Xanthomonas pathogens with differing host specificities.</title>
        <authorList>
            <person name="da Silva A.C.R."/>
            <person name="Ferro J.A."/>
            <person name="Reinach F.C."/>
            <person name="Farah C.S."/>
            <person name="Furlan L.R."/>
            <person name="Quaggio R.B."/>
            <person name="Monteiro-Vitorello C.B."/>
            <person name="Van Sluys M.A."/>
            <person name="Almeida N.F. Jr."/>
            <person name="Alves L.M.C."/>
            <person name="do Amaral A.M."/>
            <person name="Bertolini M.C."/>
            <person name="Camargo L.E.A."/>
            <person name="Camarotte G."/>
            <person name="Cannavan F."/>
            <person name="Cardozo J."/>
            <person name="Chambergo F."/>
            <person name="Ciapina L.P."/>
            <person name="Cicarelli R.M.B."/>
            <person name="Coutinho L.L."/>
            <person name="Cursino-Santos J.R."/>
            <person name="El-Dorry H."/>
            <person name="Faria J.B."/>
            <person name="Ferreira A.J.S."/>
            <person name="Ferreira R.C.C."/>
            <person name="Ferro M.I.T."/>
            <person name="Formighieri E.F."/>
            <person name="Franco M.C."/>
            <person name="Greggio C.C."/>
            <person name="Gruber A."/>
            <person name="Katsuyama A.M."/>
            <person name="Kishi L.T."/>
            <person name="Leite R.P."/>
            <person name="Lemos E.G.M."/>
            <person name="Lemos M.V.F."/>
            <person name="Locali E.C."/>
            <person name="Machado M.A."/>
            <person name="Madeira A.M.B.N."/>
            <person name="Martinez-Rossi N.M."/>
            <person name="Martins E.C."/>
            <person name="Meidanis J."/>
            <person name="Menck C.F.M."/>
            <person name="Miyaki C.Y."/>
            <person name="Moon D.H."/>
            <person name="Moreira L.M."/>
            <person name="Novo M.T.M."/>
            <person name="Okura V.K."/>
            <person name="Oliveira M.C."/>
            <person name="Oliveira V.R."/>
            <person name="Pereira H.A."/>
            <person name="Rossi A."/>
            <person name="Sena J.A.D."/>
            <person name="Silva C."/>
            <person name="de Souza R.F."/>
            <person name="Spinola L.A.F."/>
            <person name="Takita M.A."/>
            <person name="Tamura R.E."/>
            <person name="Teixeira E.C."/>
            <person name="Tezza R.I.D."/>
            <person name="Trindade dos Santos M."/>
            <person name="Truffi D."/>
            <person name="Tsai S.M."/>
            <person name="White F.F."/>
            <person name="Setubal J.C."/>
            <person name="Kitajima J.P."/>
        </authorList>
    </citation>
    <scope>NUCLEOTIDE SEQUENCE [LARGE SCALE GENOMIC DNA]</scope>
    <source>
        <strain>306</strain>
    </source>
</reference>
<keyword id="KW-0963">Cytoplasm</keyword>
<keyword id="KW-0378">Hydrolase</keyword>
<keyword id="KW-0479">Metal-binding</keyword>
<keyword id="KW-0547">Nucleotide-binding</keyword>
<name>SURE_XANAC</name>
<sequence>MRVLVSNDDGVDAPGIQVLAEALRHAGHEVMVVAPDRDRSGASNSLTLDVPIRTRRIDAQTCAVAGTPTDCVHLALTGMLDYDPDIVVSGINNSANLGDDVIYSGTVSAAMEGRFLGLPAVAVSLVTHNHQAHNYDTAARAAVEIVARLKADPLPADTILNVNVPDLAWSDVLGFEVTRLGNRHRSEPCVPQRDPRGHTVYWIGPAGPEQDAGAGTDFHAVRTGHISITPIHVDLTRYQALDTVAGWVGGLTAALDGPA</sequence>
<feature type="chain" id="PRO_0000111855" description="5'-nucleotidase SurE">
    <location>
        <begin position="1"/>
        <end position="259"/>
    </location>
</feature>
<feature type="binding site" evidence="1">
    <location>
        <position position="8"/>
    </location>
    <ligand>
        <name>a divalent metal cation</name>
        <dbReference type="ChEBI" id="CHEBI:60240"/>
    </ligand>
</feature>
<feature type="binding site" evidence="1">
    <location>
        <position position="9"/>
    </location>
    <ligand>
        <name>a divalent metal cation</name>
        <dbReference type="ChEBI" id="CHEBI:60240"/>
    </ligand>
</feature>
<feature type="binding site" evidence="1">
    <location>
        <position position="40"/>
    </location>
    <ligand>
        <name>a divalent metal cation</name>
        <dbReference type="ChEBI" id="CHEBI:60240"/>
    </ligand>
</feature>
<feature type="binding site" evidence="1">
    <location>
        <position position="92"/>
    </location>
    <ligand>
        <name>a divalent metal cation</name>
        <dbReference type="ChEBI" id="CHEBI:60240"/>
    </ligand>
</feature>